<proteinExistence type="inferred from homology"/>
<sequence>MFFRAYAKINISLDVVGKREDDYHLLEMIMQRIELYDILEVTKNKTGINIKCNKSYVPLDERNLVYKAAKLFLDTYNLKGGVDFNIIKNIPVSAGLAGGSSDAATTLLAMRELYNIDVSDDELCKLGLKIGADVPYCIKGGTALCEGIGEKVTNLKGFKGHILVLVKPKFGVSTKEVYKSLDINKIYRHPNTEGLIKAVENNDLRYVSENMRNVLENVTLKKHTIIKEIKEKMIRSGALGSMMSGSGPSVFGFFDDMLKAQRCYEYFKSKYNDVYITRTI</sequence>
<keyword id="KW-0067">ATP-binding</keyword>
<keyword id="KW-0414">Isoprene biosynthesis</keyword>
<keyword id="KW-0418">Kinase</keyword>
<keyword id="KW-0547">Nucleotide-binding</keyword>
<keyword id="KW-1185">Reference proteome</keyword>
<keyword id="KW-0808">Transferase</keyword>
<feature type="chain" id="PRO_1000007835" description="4-diphosphocytidyl-2-C-methyl-D-erythritol kinase">
    <location>
        <begin position="1"/>
        <end position="280"/>
    </location>
</feature>
<feature type="active site" evidence="1">
    <location>
        <position position="8"/>
    </location>
</feature>
<feature type="active site" evidence="1">
    <location>
        <position position="133"/>
    </location>
</feature>
<feature type="binding site" evidence="1">
    <location>
        <begin position="91"/>
        <end position="101"/>
    </location>
    <ligand>
        <name>ATP</name>
        <dbReference type="ChEBI" id="CHEBI:30616"/>
    </ligand>
</feature>
<protein>
    <recommendedName>
        <fullName evidence="1">4-diphosphocytidyl-2-C-methyl-D-erythritol kinase</fullName>
        <shortName evidence="1">CMK</shortName>
        <ecNumber evidence="1">2.7.1.148</ecNumber>
    </recommendedName>
    <alternativeName>
        <fullName evidence="1">4-(cytidine-5'-diphospho)-2-C-methyl-D-erythritol kinase</fullName>
    </alternativeName>
</protein>
<name>ISPE_CLONN</name>
<organism>
    <name type="scientific">Clostridium novyi (strain NT)</name>
    <dbReference type="NCBI Taxonomy" id="386415"/>
    <lineage>
        <taxon>Bacteria</taxon>
        <taxon>Bacillati</taxon>
        <taxon>Bacillota</taxon>
        <taxon>Clostridia</taxon>
        <taxon>Eubacteriales</taxon>
        <taxon>Clostridiaceae</taxon>
        <taxon>Clostridium</taxon>
    </lineage>
</organism>
<comment type="function">
    <text evidence="1">Catalyzes the phosphorylation of the position 2 hydroxy group of 4-diphosphocytidyl-2C-methyl-D-erythritol.</text>
</comment>
<comment type="catalytic activity">
    <reaction evidence="1">
        <text>4-CDP-2-C-methyl-D-erythritol + ATP = 4-CDP-2-C-methyl-D-erythritol 2-phosphate + ADP + H(+)</text>
        <dbReference type="Rhea" id="RHEA:18437"/>
        <dbReference type="ChEBI" id="CHEBI:15378"/>
        <dbReference type="ChEBI" id="CHEBI:30616"/>
        <dbReference type="ChEBI" id="CHEBI:57823"/>
        <dbReference type="ChEBI" id="CHEBI:57919"/>
        <dbReference type="ChEBI" id="CHEBI:456216"/>
        <dbReference type="EC" id="2.7.1.148"/>
    </reaction>
</comment>
<comment type="pathway">
    <text evidence="1">Isoprenoid biosynthesis; isopentenyl diphosphate biosynthesis via DXP pathway; isopentenyl diphosphate from 1-deoxy-D-xylulose 5-phosphate: step 3/6.</text>
</comment>
<comment type="similarity">
    <text evidence="1">Belongs to the GHMP kinase family. IspE subfamily.</text>
</comment>
<dbReference type="EC" id="2.7.1.148" evidence="1"/>
<dbReference type="EMBL" id="CP000382">
    <property type="protein sequence ID" value="ABK62529.1"/>
    <property type="molecule type" value="Genomic_DNA"/>
</dbReference>
<dbReference type="RefSeq" id="WP_011723011.1">
    <property type="nucleotide sequence ID" value="NC_008593.1"/>
</dbReference>
<dbReference type="SMR" id="A0Q330"/>
<dbReference type="STRING" id="386415.NT01CX_0566"/>
<dbReference type="KEGG" id="cno:NT01CX_0566"/>
<dbReference type="eggNOG" id="COG1947">
    <property type="taxonomic scope" value="Bacteria"/>
</dbReference>
<dbReference type="HOGENOM" id="CLU_053057_1_1_9"/>
<dbReference type="UniPathway" id="UPA00056">
    <property type="reaction ID" value="UER00094"/>
</dbReference>
<dbReference type="Proteomes" id="UP000008220">
    <property type="component" value="Chromosome"/>
</dbReference>
<dbReference type="GO" id="GO:0050515">
    <property type="term" value="F:4-(cytidine 5'-diphospho)-2-C-methyl-D-erythritol kinase activity"/>
    <property type="evidence" value="ECO:0007669"/>
    <property type="project" value="UniProtKB-UniRule"/>
</dbReference>
<dbReference type="GO" id="GO:0005524">
    <property type="term" value="F:ATP binding"/>
    <property type="evidence" value="ECO:0007669"/>
    <property type="project" value="UniProtKB-UniRule"/>
</dbReference>
<dbReference type="GO" id="GO:0019288">
    <property type="term" value="P:isopentenyl diphosphate biosynthetic process, methylerythritol 4-phosphate pathway"/>
    <property type="evidence" value="ECO:0007669"/>
    <property type="project" value="UniProtKB-UniRule"/>
</dbReference>
<dbReference type="GO" id="GO:0016114">
    <property type="term" value="P:terpenoid biosynthetic process"/>
    <property type="evidence" value="ECO:0007669"/>
    <property type="project" value="InterPro"/>
</dbReference>
<dbReference type="Gene3D" id="3.30.230.10">
    <property type="match status" value="1"/>
</dbReference>
<dbReference type="Gene3D" id="3.30.70.890">
    <property type="entry name" value="GHMP kinase, C-terminal domain"/>
    <property type="match status" value="1"/>
</dbReference>
<dbReference type="HAMAP" id="MF_00061">
    <property type="entry name" value="IspE"/>
    <property type="match status" value="1"/>
</dbReference>
<dbReference type="InterPro" id="IPR013750">
    <property type="entry name" value="GHMP_kinase_C_dom"/>
</dbReference>
<dbReference type="InterPro" id="IPR036554">
    <property type="entry name" value="GHMP_kinase_C_sf"/>
</dbReference>
<dbReference type="InterPro" id="IPR006204">
    <property type="entry name" value="GHMP_kinase_N_dom"/>
</dbReference>
<dbReference type="InterPro" id="IPR004424">
    <property type="entry name" value="IspE"/>
</dbReference>
<dbReference type="InterPro" id="IPR020568">
    <property type="entry name" value="Ribosomal_Su5_D2-typ_SF"/>
</dbReference>
<dbReference type="InterPro" id="IPR014721">
    <property type="entry name" value="Ribsml_uS5_D2-typ_fold_subgr"/>
</dbReference>
<dbReference type="NCBIfam" id="TIGR00154">
    <property type="entry name" value="ispE"/>
    <property type="match status" value="1"/>
</dbReference>
<dbReference type="PANTHER" id="PTHR43527">
    <property type="entry name" value="4-DIPHOSPHOCYTIDYL-2-C-METHYL-D-ERYTHRITOL KINASE, CHLOROPLASTIC"/>
    <property type="match status" value="1"/>
</dbReference>
<dbReference type="PANTHER" id="PTHR43527:SF2">
    <property type="entry name" value="4-DIPHOSPHOCYTIDYL-2-C-METHYL-D-ERYTHRITOL KINASE, CHLOROPLASTIC"/>
    <property type="match status" value="1"/>
</dbReference>
<dbReference type="Pfam" id="PF08544">
    <property type="entry name" value="GHMP_kinases_C"/>
    <property type="match status" value="1"/>
</dbReference>
<dbReference type="Pfam" id="PF00288">
    <property type="entry name" value="GHMP_kinases_N"/>
    <property type="match status" value="1"/>
</dbReference>
<dbReference type="PIRSF" id="PIRSF010376">
    <property type="entry name" value="IspE"/>
    <property type="match status" value="1"/>
</dbReference>
<dbReference type="SUPFAM" id="SSF55060">
    <property type="entry name" value="GHMP Kinase, C-terminal domain"/>
    <property type="match status" value="1"/>
</dbReference>
<dbReference type="SUPFAM" id="SSF54211">
    <property type="entry name" value="Ribosomal protein S5 domain 2-like"/>
    <property type="match status" value="1"/>
</dbReference>
<accession>A0Q330</accession>
<gene>
    <name evidence="1" type="primary">ispE</name>
    <name type="ordered locus">NT01CX_0566</name>
</gene>
<evidence type="ECO:0000255" key="1">
    <source>
        <dbReference type="HAMAP-Rule" id="MF_00061"/>
    </source>
</evidence>
<reference key="1">
    <citation type="journal article" date="2006" name="Nat. Biotechnol.">
        <title>The genome and transcriptomes of the anti-tumor agent Clostridium novyi-NT.</title>
        <authorList>
            <person name="Bettegowda C."/>
            <person name="Huang X."/>
            <person name="Lin J."/>
            <person name="Cheong I."/>
            <person name="Kohli M."/>
            <person name="Szabo S.A."/>
            <person name="Zhang X."/>
            <person name="Diaz L.A. Jr."/>
            <person name="Velculescu V.E."/>
            <person name="Parmigiani G."/>
            <person name="Kinzler K.W."/>
            <person name="Vogelstein B."/>
            <person name="Zhou S."/>
        </authorList>
    </citation>
    <scope>NUCLEOTIDE SEQUENCE [LARGE SCALE GENOMIC DNA]</scope>
    <source>
        <strain>NT</strain>
    </source>
</reference>